<protein>
    <recommendedName>
        <fullName>Acyl-CoA-binding protein homolog 3</fullName>
        <shortName>ACBP-3</shortName>
    </recommendedName>
</protein>
<accession>Q20507</accession>
<gene>
    <name type="primary">acbp-3</name>
    <name type="ORF">F47B10.7</name>
</gene>
<feature type="chain" id="PRO_0000214026" description="Acyl-CoA-binding protein homolog 3">
    <location>
        <begin position="1"/>
        <end position="116"/>
    </location>
</feature>
<feature type="domain" description="ACB" evidence="2">
    <location>
        <begin position="3"/>
        <end position="92"/>
    </location>
</feature>
<feature type="binding site" evidence="1">
    <location>
        <begin position="34"/>
        <end position="38"/>
    </location>
    <ligand>
        <name>an acyl-CoA</name>
        <dbReference type="ChEBI" id="CHEBI:58342"/>
    </ligand>
</feature>
<feature type="binding site" evidence="1">
    <location>
        <position position="60"/>
    </location>
    <ligand>
        <name>an acyl-CoA</name>
        <dbReference type="ChEBI" id="CHEBI:58342"/>
    </ligand>
</feature>
<feature type="binding site" evidence="1">
    <location>
        <position position="79"/>
    </location>
    <ligand>
        <name>an acyl-CoA</name>
        <dbReference type="ChEBI" id="CHEBI:58342"/>
    </ligand>
</feature>
<comment type="function">
    <text evidence="1">Binds medium- and long-chain acyl-CoA esters with very high affinity and may function as an intracellular carrier of acyl-CoA esters.</text>
</comment>
<comment type="similarity">
    <text evidence="3">Belongs to the ACBP family.</text>
</comment>
<name>ACBP3_CAEEL</name>
<evidence type="ECO:0000250" key="1"/>
<evidence type="ECO:0000255" key="2">
    <source>
        <dbReference type="PROSITE-ProRule" id="PRU00573"/>
    </source>
</evidence>
<evidence type="ECO:0000305" key="3"/>
<organism>
    <name type="scientific">Caenorhabditis elegans</name>
    <dbReference type="NCBI Taxonomy" id="6239"/>
    <lineage>
        <taxon>Eukaryota</taxon>
        <taxon>Metazoa</taxon>
        <taxon>Ecdysozoa</taxon>
        <taxon>Nematoda</taxon>
        <taxon>Chromadorea</taxon>
        <taxon>Rhabditida</taxon>
        <taxon>Rhabditina</taxon>
        <taxon>Rhabditomorpha</taxon>
        <taxon>Rhabditoidea</taxon>
        <taxon>Rhabditidae</taxon>
        <taxon>Peloderinae</taxon>
        <taxon>Caenorhabditis</taxon>
    </lineage>
</organism>
<sequence length="116" mass="13174">MSLQEKFDAAVEIIQKLPKTGPVATSNDQKLTFYSLFKQASIGDVNTDRPGIFSIIERKKWDSWKELEGVSQDEAKERYIKALNDMFDKIAEELDVAAWLEQIDPVIKTNLALIGK</sequence>
<proteinExistence type="inferred from homology"/>
<dbReference type="EMBL" id="Z68004">
    <property type="protein sequence ID" value="CAA91987.2"/>
    <property type="molecule type" value="Genomic_DNA"/>
</dbReference>
<dbReference type="PIR" id="T22338">
    <property type="entry name" value="T22338"/>
</dbReference>
<dbReference type="RefSeq" id="NP_509822.2">
    <property type="nucleotide sequence ID" value="NM_077421.5"/>
</dbReference>
<dbReference type="SMR" id="Q20507"/>
<dbReference type="BioGRID" id="46192">
    <property type="interactions" value="17"/>
</dbReference>
<dbReference type="FunCoup" id="Q20507">
    <property type="interactions" value="70"/>
</dbReference>
<dbReference type="STRING" id="6239.F47B10.7.1"/>
<dbReference type="PaxDb" id="6239-F47B10.7"/>
<dbReference type="PeptideAtlas" id="Q20507"/>
<dbReference type="EnsemblMetazoa" id="F47B10.7.1">
    <property type="protein sequence ID" value="F47B10.7.1"/>
    <property type="gene ID" value="WBGene00009818"/>
</dbReference>
<dbReference type="GeneID" id="181281"/>
<dbReference type="KEGG" id="cel:CELE_F47B10.7"/>
<dbReference type="UCSC" id="F47B10.7">
    <property type="organism name" value="c. elegans"/>
</dbReference>
<dbReference type="AGR" id="WB:WBGene00009818"/>
<dbReference type="CTD" id="181281"/>
<dbReference type="WormBase" id="F47B10.7">
    <property type="protein sequence ID" value="CE32423"/>
    <property type="gene ID" value="WBGene00009818"/>
    <property type="gene designation" value="acbp-3"/>
</dbReference>
<dbReference type="eggNOG" id="KOG0817">
    <property type="taxonomic scope" value="Eukaryota"/>
</dbReference>
<dbReference type="HOGENOM" id="CLU_118853_1_0_1"/>
<dbReference type="InParanoid" id="Q20507"/>
<dbReference type="OMA" id="SEKGHPW"/>
<dbReference type="OrthoDB" id="71307at2759"/>
<dbReference type="PhylomeDB" id="Q20507"/>
<dbReference type="Reactome" id="R-CEL-390918">
    <property type="pathway name" value="Peroxisomal lipid metabolism"/>
</dbReference>
<dbReference type="PRO" id="PR:Q20507"/>
<dbReference type="Proteomes" id="UP000001940">
    <property type="component" value="Chromosome X"/>
</dbReference>
<dbReference type="Bgee" id="WBGene00009818">
    <property type="expression patterns" value="Expressed in larva and 3 other cell types or tissues"/>
</dbReference>
<dbReference type="GO" id="GO:0005737">
    <property type="term" value="C:cytoplasm"/>
    <property type="evidence" value="ECO:0000318"/>
    <property type="project" value="GO_Central"/>
</dbReference>
<dbReference type="GO" id="GO:0000062">
    <property type="term" value="F:fatty-acyl-CoA binding"/>
    <property type="evidence" value="ECO:0000318"/>
    <property type="project" value="GO_Central"/>
</dbReference>
<dbReference type="GO" id="GO:0006631">
    <property type="term" value="P:fatty acid metabolic process"/>
    <property type="evidence" value="ECO:0000318"/>
    <property type="project" value="GO_Central"/>
</dbReference>
<dbReference type="GO" id="GO:0019915">
    <property type="term" value="P:lipid storage"/>
    <property type="evidence" value="ECO:0000315"/>
    <property type="project" value="WormBase"/>
</dbReference>
<dbReference type="CDD" id="cd00435">
    <property type="entry name" value="ACBP"/>
    <property type="match status" value="1"/>
</dbReference>
<dbReference type="FunFam" id="1.20.80.10:FF:000010">
    <property type="entry name" value="Acyl-CoA-binding domain-containing protein 5"/>
    <property type="match status" value="1"/>
</dbReference>
<dbReference type="Gene3D" id="1.20.80.10">
    <property type="match status" value="1"/>
</dbReference>
<dbReference type="InterPro" id="IPR022408">
    <property type="entry name" value="Acyl-CoA-binding_prot_CS"/>
</dbReference>
<dbReference type="InterPro" id="IPR000582">
    <property type="entry name" value="Acyl-CoA-binding_protein"/>
</dbReference>
<dbReference type="InterPro" id="IPR035984">
    <property type="entry name" value="Acyl-CoA-binding_sf"/>
</dbReference>
<dbReference type="InterPro" id="IPR014352">
    <property type="entry name" value="FERM/acyl-CoA-bd_prot_sf"/>
</dbReference>
<dbReference type="PANTHER" id="PTHR23310:SF120">
    <property type="entry name" value="ACYL-COA-BINDING PROTEIN HOMOLOG 3"/>
    <property type="match status" value="1"/>
</dbReference>
<dbReference type="PANTHER" id="PTHR23310">
    <property type="entry name" value="ACYL-COA-BINDING PROTEIN, ACBP"/>
    <property type="match status" value="1"/>
</dbReference>
<dbReference type="Pfam" id="PF00887">
    <property type="entry name" value="ACBP"/>
    <property type="match status" value="1"/>
</dbReference>
<dbReference type="PRINTS" id="PR00689">
    <property type="entry name" value="ACOABINDINGP"/>
</dbReference>
<dbReference type="SUPFAM" id="SSF47027">
    <property type="entry name" value="Acyl-CoA binding protein"/>
    <property type="match status" value="1"/>
</dbReference>
<dbReference type="PROSITE" id="PS00880">
    <property type="entry name" value="ACB_1"/>
    <property type="match status" value="1"/>
</dbReference>
<dbReference type="PROSITE" id="PS51228">
    <property type="entry name" value="ACB_2"/>
    <property type="match status" value="1"/>
</dbReference>
<reference key="1">
    <citation type="journal article" date="1998" name="Science">
        <title>Genome sequence of the nematode C. elegans: a platform for investigating biology.</title>
        <authorList>
            <consortium name="The C. elegans sequencing consortium"/>
        </authorList>
    </citation>
    <scope>NUCLEOTIDE SEQUENCE [LARGE SCALE GENOMIC DNA]</scope>
    <source>
        <strain>Bristol N2</strain>
    </source>
</reference>
<keyword id="KW-0446">Lipid-binding</keyword>
<keyword id="KW-1185">Reference proteome</keyword>
<keyword id="KW-0813">Transport</keyword>